<dbReference type="EMBL" id="AE006468">
    <property type="protein sequence ID" value="AAL19327.1"/>
    <property type="molecule type" value="Genomic_DNA"/>
</dbReference>
<dbReference type="RefSeq" id="WP_000556518.1">
    <property type="nucleotide sequence ID" value="NC_003197.2"/>
</dbReference>
<dbReference type="SMR" id="Q8ZRF8"/>
<dbReference type="STRING" id="99287.STM0373"/>
<dbReference type="PaxDb" id="99287-STM0373"/>
<dbReference type="KEGG" id="stm:STM0373"/>
<dbReference type="PATRIC" id="fig|99287.12.peg.396"/>
<dbReference type="HOGENOM" id="CLU_017493_0_0_6"/>
<dbReference type="OMA" id="PYADNAM"/>
<dbReference type="PhylomeDB" id="Q8ZRF8"/>
<dbReference type="BioCyc" id="SENT99287:STM0373-MONOMER"/>
<dbReference type="Proteomes" id="UP000001014">
    <property type="component" value="Chromosome"/>
</dbReference>
<dbReference type="GO" id="GO:0019867">
    <property type="term" value="C:outer membrane"/>
    <property type="evidence" value="ECO:0007669"/>
    <property type="project" value="InterPro"/>
</dbReference>
<dbReference type="CDD" id="cd00253">
    <property type="entry name" value="PL_Passenger_AT"/>
    <property type="match status" value="1"/>
</dbReference>
<dbReference type="Gene3D" id="2.160.20.20">
    <property type="match status" value="1"/>
</dbReference>
<dbReference type="Gene3D" id="2.40.128.130">
    <property type="entry name" value="Autotransporter beta-domain"/>
    <property type="match status" value="1"/>
</dbReference>
<dbReference type="InterPro" id="IPR005546">
    <property type="entry name" value="Autotransporte_beta"/>
</dbReference>
<dbReference type="InterPro" id="IPR036709">
    <property type="entry name" value="Autotransporte_beta_dom_sf"/>
</dbReference>
<dbReference type="InterPro" id="IPR051551">
    <property type="entry name" value="Autotransporter_adhesion"/>
</dbReference>
<dbReference type="InterPro" id="IPR012332">
    <property type="entry name" value="Autotransporter_pectin_lyase_C"/>
</dbReference>
<dbReference type="InterPro" id="IPR006315">
    <property type="entry name" value="OM_autotransptr_brl_dom"/>
</dbReference>
<dbReference type="InterPro" id="IPR011050">
    <property type="entry name" value="Pectin_lyase_fold/virulence"/>
</dbReference>
<dbReference type="InterPro" id="IPR003991">
    <property type="entry name" value="Pertactin_virulence_factor"/>
</dbReference>
<dbReference type="NCBIfam" id="TIGR01414">
    <property type="entry name" value="autotrans_barl"/>
    <property type="match status" value="1"/>
</dbReference>
<dbReference type="PANTHER" id="PTHR35037:SF2">
    <property type="match status" value="1"/>
</dbReference>
<dbReference type="PANTHER" id="PTHR35037">
    <property type="entry name" value="C-TERMINAL REGION OF AIDA-LIKE PROTEIN"/>
    <property type="match status" value="1"/>
</dbReference>
<dbReference type="Pfam" id="PF03797">
    <property type="entry name" value="Autotransporter"/>
    <property type="match status" value="1"/>
</dbReference>
<dbReference type="PRINTS" id="PR01484">
    <property type="entry name" value="PRTACTNFAMLY"/>
</dbReference>
<dbReference type="SMART" id="SM00869">
    <property type="entry name" value="Autotransporter"/>
    <property type="match status" value="1"/>
</dbReference>
<dbReference type="SUPFAM" id="SSF103515">
    <property type="entry name" value="Autotransporter"/>
    <property type="match status" value="1"/>
</dbReference>
<dbReference type="SUPFAM" id="SSF51126">
    <property type="entry name" value="Pectin lyase-like"/>
    <property type="match status" value="1"/>
</dbReference>
<dbReference type="PROSITE" id="PS51208">
    <property type="entry name" value="AUTOTRANSPORTER"/>
    <property type="match status" value="1"/>
</dbReference>
<proteinExistence type="inferred from homology"/>
<sequence length="978" mass="105753">MHSWKKKLVVSQLALACTLAITSQANATTYDTWTYYDNPTTALDWNNMDAAGTVDGNYVNYSGFVYYNNANGDFDQTFNGDTVNGTISTYYLNHDYNDATSNELNISNSVIHGSITSMLPIGYYDRFDTLDHDGYSEYYRFNNGTDTVDGNWYDGDVFTLNIANSTIDDDYEAFYFTDSYKDGDVTKYTNETFDVSEGVAVNLDVESNINISNNSRVAGIALSQGNTYNNTYTTESHNWDNNINVFDSTVTSGSDYILDSAYTTDTGTFGTGHFGNSDEPSDYTGAGDVALSFTDDNGASDYAMKNNVYFSNSTLMGDVKFTSNWNANFDADGDDTNGDGVPDTNHGWADDGLNVDELNLTLDNGSKWVGQATYTVDTTSRMYDVETNSLTPGATLEDNAWNRIVGNEVFQSGVFNVTLNNGSEWDTVGDSTVDTLAVNNGSQVNVSNSDLTSDTIDLTNGSSLNIGEGGYVDTDHLTIDSYSTVGLTESTGWSTYSNLYANTITVTNGGVLDVNVGQFDTEVFSTDKLELTSGNTADHNGNVVSGVFNIHSSDYVLNADLVNDRTWDTTQANYGYGTIAMNSDGHLTINGNGDINNGDELDNSSVDNVVAATGNYKVRIDNATGAGSVADYKGNELIYVNDVNTDATFSAANKADLGAYTYQAKQEGNTVVLEQMELTDYANMALSIPSANTNIWNLEQDTVGTRLTNARHGLADNGGAWVSYFGGNFNGDNGTINYDQDVNGIMVGVDTKVDGNNAKWIVGAAAGFAKGDLSDRTGQVDQDSQSAYIYSSARFANNIFVDGNLSYSHFNNDLSANMSDGTYVDGNTSSDAWGFGLKLGYDLKLGDAGYVTPYGSVSGLFQSGDDYQLSNDMKVDGQSYDSMRYELGVDAGYTFTYSEDQALTPYFKLAYVYDDSNNDADVNGDSIDNGVEGSAVRVGLGTQFSFTKNFSAYTDANYLGGGDVDQDWSANVGVKYTW</sequence>
<reference key="1">
    <citation type="journal article" date="2001" name="Nature">
        <title>Complete genome sequence of Salmonella enterica serovar Typhimurium LT2.</title>
        <authorList>
            <person name="McClelland M."/>
            <person name="Sanderson K.E."/>
            <person name="Spieth J."/>
            <person name="Clifton S.W."/>
            <person name="Latreille P."/>
            <person name="Courtney L."/>
            <person name="Porwollik S."/>
            <person name="Ali J."/>
            <person name="Dante M."/>
            <person name="Du F."/>
            <person name="Hou S."/>
            <person name="Layman D."/>
            <person name="Leonard S."/>
            <person name="Nguyen C."/>
            <person name="Scott K."/>
            <person name="Holmes A."/>
            <person name="Grewal N."/>
            <person name="Mulvaney E."/>
            <person name="Ryan E."/>
            <person name="Sun H."/>
            <person name="Florea L."/>
            <person name="Miller W."/>
            <person name="Stoneking T."/>
            <person name="Nhan M."/>
            <person name="Waterston R."/>
            <person name="Wilson R.K."/>
        </authorList>
    </citation>
    <scope>NUCLEOTIDE SEQUENCE [LARGE SCALE GENOMIC DNA]</scope>
    <source>
        <strain>LT2 / SGSC1412 / ATCC 700720</strain>
    </source>
</reference>
<evidence type="ECO:0000255" key="1"/>
<evidence type="ECO:0000255" key="2">
    <source>
        <dbReference type="PROSITE-ProRule" id="PRU00556"/>
    </source>
</evidence>
<gene>
    <name type="primary">yaiT</name>
    <name type="ordered locus">STM0373</name>
</gene>
<feature type="signal peptide" evidence="1">
    <location>
        <begin position="1"/>
        <end position="27"/>
    </location>
</feature>
<feature type="chain" id="PRO_0000002712" description="Uncharacterized protein YaiT">
    <location>
        <begin position="28"/>
        <end position="978"/>
    </location>
</feature>
<feature type="domain" description="Autotransporter" evidence="2">
    <location>
        <begin position="713"/>
        <end position="978"/>
    </location>
</feature>
<protein>
    <recommendedName>
        <fullName>Uncharacterized protein YaiT</fullName>
    </recommendedName>
</protein>
<organism>
    <name type="scientific">Salmonella typhimurium (strain LT2 / SGSC1412 / ATCC 700720)</name>
    <dbReference type="NCBI Taxonomy" id="99287"/>
    <lineage>
        <taxon>Bacteria</taxon>
        <taxon>Pseudomonadati</taxon>
        <taxon>Pseudomonadota</taxon>
        <taxon>Gammaproteobacteria</taxon>
        <taxon>Enterobacterales</taxon>
        <taxon>Enterobacteriaceae</taxon>
        <taxon>Salmonella</taxon>
    </lineage>
</organism>
<keyword id="KW-1185">Reference proteome</keyword>
<keyword id="KW-0732">Signal</keyword>
<accession>Q8ZRF8</accession>
<name>YAIT_SALTY</name>